<dbReference type="EMBL" id="DAAA02031394">
    <property type="status" value="NOT_ANNOTATED_CDS"/>
    <property type="molecule type" value="Genomic_DNA"/>
</dbReference>
<dbReference type="EMBL" id="BC123468">
    <property type="protein sequence ID" value="AAI23469.1"/>
    <property type="molecule type" value="mRNA"/>
</dbReference>
<dbReference type="RefSeq" id="NP_001076902.1">
    <property type="nucleotide sequence ID" value="NM_001083433.1"/>
</dbReference>
<dbReference type="FunCoup" id="A4FUY9">
    <property type="interactions" value="383"/>
</dbReference>
<dbReference type="STRING" id="9913.ENSBTAP00000042266"/>
<dbReference type="GlyCosmos" id="A4FUY9">
    <property type="glycosylation" value="2 sites, No reported glycans"/>
</dbReference>
<dbReference type="GlyGen" id="A4FUY9">
    <property type="glycosylation" value="2 sites"/>
</dbReference>
<dbReference type="PaxDb" id="9913-ENSBTAP00000042266"/>
<dbReference type="Ensembl" id="ENSBTAT00000044807.3">
    <property type="protein sequence ID" value="ENSBTAP00000042266.2"/>
    <property type="gene ID" value="ENSBTAG00000000899.6"/>
</dbReference>
<dbReference type="GeneID" id="514758"/>
<dbReference type="KEGG" id="bta:514758"/>
<dbReference type="CTD" id="200728"/>
<dbReference type="VEuPathDB" id="HostDB:ENSBTAG00000000899"/>
<dbReference type="VGNC" id="VGNC:35995">
    <property type="gene designation" value="TMEM17"/>
</dbReference>
<dbReference type="eggNOG" id="KOG4694">
    <property type="taxonomic scope" value="Eukaryota"/>
</dbReference>
<dbReference type="GeneTree" id="ENSGT00940000153899"/>
<dbReference type="HOGENOM" id="CLU_092836_0_0_1"/>
<dbReference type="InParanoid" id="A4FUY9"/>
<dbReference type="OMA" id="LWWVSCI"/>
<dbReference type="OrthoDB" id="311720at2759"/>
<dbReference type="TreeFam" id="TF323824"/>
<dbReference type="Proteomes" id="UP000009136">
    <property type="component" value="Chromosome 11"/>
</dbReference>
<dbReference type="Bgee" id="ENSBTAG00000000899">
    <property type="expression patterns" value="Expressed in spermatocyte and 105 other cell types or tissues"/>
</dbReference>
<dbReference type="GO" id="GO:0060170">
    <property type="term" value="C:ciliary membrane"/>
    <property type="evidence" value="ECO:0000250"/>
    <property type="project" value="UniProtKB"/>
</dbReference>
<dbReference type="GO" id="GO:0035869">
    <property type="term" value="C:ciliary transition zone"/>
    <property type="evidence" value="ECO:0000250"/>
    <property type="project" value="UniProtKB"/>
</dbReference>
<dbReference type="GO" id="GO:0036038">
    <property type="term" value="C:MKS complex"/>
    <property type="evidence" value="ECO:0000250"/>
    <property type="project" value="UniProtKB"/>
</dbReference>
<dbReference type="GO" id="GO:0060271">
    <property type="term" value="P:cilium assembly"/>
    <property type="evidence" value="ECO:0000250"/>
    <property type="project" value="UniProtKB"/>
</dbReference>
<dbReference type="GO" id="GO:1905515">
    <property type="term" value="P:non-motile cilium assembly"/>
    <property type="evidence" value="ECO:0000318"/>
    <property type="project" value="GO_Central"/>
</dbReference>
<dbReference type="GO" id="GO:0007224">
    <property type="term" value="P:smoothened signaling pathway"/>
    <property type="evidence" value="ECO:0000250"/>
    <property type="project" value="UniProtKB"/>
</dbReference>
<dbReference type="InterPro" id="IPR019184">
    <property type="entry name" value="Uncharacterised_TM-17"/>
</dbReference>
<dbReference type="PANTHER" id="PTHR13531">
    <property type="entry name" value="GEO07735P1-RELATED-RELATED"/>
    <property type="match status" value="1"/>
</dbReference>
<dbReference type="PANTHER" id="PTHR13531:SF14">
    <property type="entry name" value="TRANSMEMBRANE PROTEIN 17"/>
    <property type="match status" value="1"/>
</dbReference>
<dbReference type="Pfam" id="PF09799">
    <property type="entry name" value="Transmemb_17"/>
    <property type="match status" value="1"/>
</dbReference>
<protein>
    <recommendedName>
        <fullName>Transmembrane protein 17</fullName>
    </recommendedName>
</protein>
<organism>
    <name type="scientific">Bos taurus</name>
    <name type="common">Bovine</name>
    <dbReference type="NCBI Taxonomy" id="9913"/>
    <lineage>
        <taxon>Eukaryota</taxon>
        <taxon>Metazoa</taxon>
        <taxon>Chordata</taxon>
        <taxon>Craniata</taxon>
        <taxon>Vertebrata</taxon>
        <taxon>Euteleostomi</taxon>
        <taxon>Mammalia</taxon>
        <taxon>Eutheria</taxon>
        <taxon>Laurasiatheria</taxon>
        <taxon>Artiodactyla</taxon>
        <taxon>Ruminantia</taxon>
        <taxon>Pecora</taxon>
        <taxon>Bovidae</taxon>
        <taxon>Bovinae</taxon>
        <taxon>Bos</taxon>
    </lineage>
</organism>
<feature type="chain" id="PRO_0000415836" description="Transmembrane protein 17">
    <location>
        <begin position="1"/>
        <end position="198"/>
    </location>
</feature>
<feature type="transmembrane region" description="Helical" evidence="2">
    <location>
        <begin position="45"/>
        <end position="65"/>
    </location>
</feature>
<feature type="transmembrane region" description="Helical" evidence="2">
    <location>
        <begin position="78"/>
        <end position="98"/>
    </location>
</feature>
<feature type="transmembrane region" description="Helical" evidence="2">
    <location>
        <begin position="110"/>
        <end position="130"/>
    </location>
</feature>
<feature type="transmembrane region" description="Helical" evidence="2">
    <location>
        <begin position="142"/>
        <end position="162"/>
    </location>
</feature>
<feature type="glycosylation site" description="N-linked (GlcNAc...) asparagine" evidence="2">
    <location>
        <position position="13"/>
    </location>
</feature>
<feature type="glycosylation site" description="N-linked (GlcNAc...) asparagine" evidence="2">
    <location>
        <position position="23"/>
    </location>
</feature>
<keyword id="KW-1003">Cell membrane</keyword>
<keyword id="KW-0966">Cell projection</keyword>
<keyword id="KW-0969">Cilium</keyword>
<keyword id="KW-0970">Cilium biogenesis/degradation</keyword>
<keyword id="KW-0325">Glycoprotein</keyword>
<keyword id="KW-0472">Membrane</keyword>
<keyword id="KW-1185">Reference proteome</keyword>
<keyword id="KW-0812">Transmembrane</keyword>
<keyword id="KW-1133">Transmembrane helix</keyword>
<sequence>MELPDPVRQRLGNFSRTVFSDSNRTGPEYNEGPDNEMVSSLALQMSLYFNTYFFPLWWVSSIMMLQMKYSILPDYYKFIVVTIIILITLIEAIRLYLGYMGNLQEKVPELAGFWLLSLLLQLPLILFLLFNEGLTNLPLEKAVHIIFTIFLTFQVVSAFLTLRKMVNQLATRFHLQDFDRLSASRGDMRRVRSCIEEI</sequence>
<gene>
    <name type="primary">TMEM17</name>
</gene>
<evidence type="ECO:0000250" key="1"/>
<evidence type="ECO:0000255" key="2"/>
<evidence type="ECO:0000305" key="3"/>
<comment type="function">
    <text evidence="1">Transmembrane component of the tectonic-like complex, a complex localized at the transition zone of primary cilia and acting as a barrier that prevents diffusion of transmembrane proteins between the cilia and plasma membranes. Required for ciliogenesis and sonic hedgehog/SHH signaling (By similarity).</text>
</comment>
<comment type="subunit">
    <text evidence="1">Part of the tectonic-like complex (also named B9 complex).</text>
</comment>
<comment type="subcellular location">
    <subcellularLocation>
        <location evidence="1">Cell projection</location>
        <location evidence="1">Cilium membrane</location>
        <topology evidence="1">Multi-pass membrane protein</topology>
    </subcellularLocation>
    <text evidence="1">Localizes to the transition zone of primary cilia.</text>
</comment>
<comment type="similarity">
    <text evidence="3">Belongs to the TMEM17 family.</text>
</comment>
<name>TMM17_BOVIN</name>
<proteinExistence type="evidence at transcript level"/>
<reference key="1">
    <citation type="journal article" date="2009" name="Genome Biol.">
        <title>A whole-genome assembly of the domestic cow, Bos taurus.</title>
        <authorList>
            <person name="Zimin A.V."/>
            <person name="Delcher A.L."/>
            <person name="Florea L."/>
            <person name="Kelley D.R."/>
            <person name="Schatz M.C."/>
            <person name="Puiu D."/>
            <person name="Hanrahan F."/>
            <person name="Pertea G."/>
            <person name="Van Tassell C.P."/>
            <person name="Sonstegard T.S."/>
            <person name="Marcais G."/>
            <person name="Roberts M."/>
            <person name="Subramanian P."/>
            <person name="Yorke J.A."/>
            <person name="Salzberg S.L."/>
        </authorList>
    </citation>
    <scope>NUCLEOTIDE SEQUENCE [LARGE SCALE GENOMIC DNA]</scope>
    <source>
        <strain>Hereford</strain>
    </source>
</reference>
<reference key="2">
    <citation type="submission" date="2006-09" db="EMBL/GenBank/DDBJ databases">
        <authorList>
            <consortium name="NIH - Mammalian Gene Collection (MGC) project"/>
        </authorList>
    </citation>
    <scope>NUCLEOTIDE SEQUENCE [LARGE SCALE MRNA]</scope>
    <source>
        <strain>Hereford</strain>
        <tissue>Basal ganglia</tissue>
    </source>
</reference>
<accession>A4FUY9</accession>